<feature type="chain" id="PRO_0000266866" description="Probable GTP-binding protein EngB">
    <location>
        <begin position="1"/>
        <end position="195"/>
    </location>
</feature>
<feature type="domain" description="EngB-type G" evidence="1">
    <location>
        <begin position="22"/>
        <end position="195"/>
    </location>
</feature>
<feature type="binding site" evidence="1">
    <location>
        <begin position="30"/>
        <end position="37"/>
    </location>
    <ligand>
        <name>GTP</name>
        <dbReference type="ChEBI" id="CHEBI:37565"/>
    </ligand>
</feature>
<feature type="binding site" evidence="1">
    <location>
        <position position="37"/>
    </location>
    <ligand>
        <name>Mg(2+)</name>
        <dbReference type="ChEBI" id="CHEBI:18420"/>
    </ligand>
</feature>
<feature type="binding site" evidence="1">
    <location>
        <begin position="57"/>
        <end position="61"/>
    </location>
    <ligand>
        <name>GTP</name>
        <dbReference type="ChEBI" id="CHEBI:37565"/>
    </ligand>
</feature>
<feature type="binding site" evidence="1">
    <location>
        <position position="59"/>
    </location>
    <ligand>
        <name>Mg(2+)</name>
        <dbReference type="ChEBI" id="CHEBI:18420"/>
    </ligand>
</feature>
<feature type="binding site" evidence="1">
    <location>
        <begin position="75"/>
        <end position="78"/>
    </location>
    <ligand>
        <name>GTP</name>
        <dbReference type="ChEBI" id="CHEBI:37565"/>
    </ligand>
</feature>
<feature type="binding site" evidence="1">
    <location>
        <begin position="142"/>
        <end position="145"/>
    </location>
    <ligand>
        <name>GTP</name>
        <dbReference type="ChEBI" id="CHEBI:37565"/>
    </ligand>
</feature>
<feature type="binding site" evidence="1">
    <location>
        <begin position="174"/>
        <end position="176"/>
    </location>
    <ligand>
        <name>GTP</name>
        <dbReference type="ChEBI" id="CHEBI:37565"/>
    </ligand>
</feature>
<protein>
    <recommendedName>
        <fullName evidence="1">Probable GTP-binding protein EngB</fullName>
    </recommendedName>
</protein>
<dbReference type="EMBL" id="BA000043">
    <property type="protein sequence ID" value="BAD76934.1"/>
    <property type="molecule type" value="Genomic_DNA"/>
</dbReference>
<dbReference type="SMR" id="Q5KWK2"/>
<dbReference type="STRING" id="235909.GK2649"/>
<dbReference type="KEGG" id="gka:GK2649"/>
<dbReference type="eggNOG" id="COG0218">
    <property type="taxonomic scope" value="Bacteria"/>
</dbReference>
<dbReference type="HOGENOM" id="CLU_033732_3_0_9"/>
<dbReference type="Proteomes" id="UP000001172">
    <property type="component" value="Chromosome"/>
</dbReference>
<dbReference type="GO" id="GO:0005829">
    <property type="term" value="C:cytosol"/>
    <property type="evidence" value="ECO:0007669"/>
    <property type="project" value="TreeGrafter"/>
</dbReference>
<dbReference type="GO" id="GO:0005525">
    <property type="term" value="F:GTP binding"/>
    <property type="evidence" value="ECO:0007669"/>
    <property type="project" value="UniProtKB-UniRule"/>
</dbReference>
<dbReference type="GO" id="GO:0046872">
    <property type="term" value="F:metal ion binding"/>
    <property type="evidence" value="ECO:0007669"/>
    <property type="project" value="UniProtKB-KW"/>
</dbReference>
<dbReference type="GO" id="GO:0000917">
    <property type="term" value="P:division septum assembly"/>
    <property type="evidence" value="ECO:0007669"/>
    <property type="project" value="UniProtKB-KW"/>
</dbReference>
<dbReference type="CDD" id="cd01876">
    <property type="entry name" value="YihA_EngB"/>
    <property type="match status" value="1"/>
</dbReference>
<dbReference type="FunFam" id="3.40.50.300:FF:000098">
    <property type="entry name" value="Probable GTP-binding protein EngB"/>
    <property type="match status" value="1"/>
</dbReference>
<dbReference type="Gene3D" id="3.40.50.300">
    <property type="entry name" value="P-loop containing nucleotide triphosphate hydrolases"/>
    <property type="match status" value="1"/>
</dbReference>
<dbReference type="HAMAP" id="MF_00321">
    <property type="entry name" value="GTPase_EngB"/>
    <property type="match status" value="1"/>
</dbReference>
<dbReference type="InterPro" id="IPR030393">
    <property type="entry name" value="G_ENGB_dom"/>
</dbReference>
<dbReference type="InterPro" id="IPR006073">
    <property type="entry name" value="GTP-bd"/>
</dbReference>
<dbReference type="InterPro" id="IPR019987">
    <property type="entry name" value="GTP-bd_ribosome_bio_YsxC"/>
</dbReference>
<dbReference type="InterPro" id="IPR027417">
    <property type="entry name" value="P-loop_NTPase"/>
</dbReference>
<dbReference type="InterPro" id="IPR005225">
    <property type="entry name" value="Small_GTP-bd"/>
</dbReference>
<dbReference type="NCBIfam" id="TIGR03598">
    <property type="entry name" value="GTPase_YsxC"/>
    <property type="match status" value="1"/>
</dbReference>
<dbReference type="NCBIfam" id="TIGR00231">
    <property type="entry name" value="small_GTP"/>
    <property type="match status" value="1"/>
</dbReference>
<dbReference type="PANTHER" id="PTHR11649:SF13">
    <property type="entry name" value="ENGB-TYPE G DOMAIN-CONTAINING PROTEIN"/>
    <property type="match status" value="1"/>
</dbReference>
<dbReference type="PANTHER" id="PTHR11649">
    <property type="entry name" value="MSS1/TRME-RELATED GTP-BINDING PROTEIN"/>
    <property type="match status" value="1"/>
</dbReference>
<dbReference type="Pfam" id="PF01926">
    <property type="entry name" value="MMR_HSR1"/>
    <property type="match status" value="1"/>
</dbReference>
<dbReference type="SUPFAM" id="SSF52540">
    <property type="entry name" value="P-loop containing nucleoside triphosphate hydrolases"/>
    <property type="match status" value="1"/>
</dbReference>
<dbReference type="PROSITE" id="PS51706">
    <property type="entry name" value="G_ENGB"/>
    <property type="match status" value="1"/>
</dbReference>
<organism>
    <name type="scientific">Geobacillus kaustophilus (strain HTA426)</name>
    <dbReference type="NCBI Taxonomy" id="235909"/>
    <lineage>
        <taxon>Bacteria</taxon>
        <taxon>Bacillati</taxon>
        <taxon>Bacillota</taxon>
        <taxon>Bacilli</taxon>
        <taxon>Bacillales</taxon>
        <taxon>Anoxybacillaceae</taxon>
        <taxon>Geobacillus</taxon>
        <taxon>Geobacillus thermoleovorans group</taxon>
    </lineage>
</organism>
<evidence type="ECO:0000255" key="1">
    <source>
        <dbReference type="HAMAP-Rule" id="MF_00321"/>
    </source>
</evidence>
<sequence>MNVKKAELVTSAVKPEQYPDGGRPEVALAGRSNVGKSSFINKMINRKNLARTSSKPGKTQTLNFYLINDSFYFVDVPGYGFARVSKQERQKWGNMMETYFTTREALKAAVLLVDLRHPPTKDDVMMYEFLKHYEIPVIVIATKADKVPRGKHQKHAKIARETLRMADGDPLILFSAETGQGKDEAWAALLPFVAS</sequence>
<keyword id="KW-0131">Cell cycle</keyword>
<keyword id="KW-0132">Cell division</keyword>
<keyword id="KW-0342">GTP-binding</keyword>
<keyword id="KW-0460">Magnesium</keyword>
<keyword id="KW-0479">Metal-binding</keyword>
<keyword id="KW-0547">Nucleotide-binding</keyword>
<keyword id="KW-1185">Reference proteome</keyword>
<keyword id="KW-0717">Septation</keyword>
<reference key="1">
    <citation type="journal article" date="2004" name="Nucleic Acids Res.">
        <title>Thermoadaptation trait revealed by the genome sequence of thermophilic Geobacillus kaustophilus.</title>
        <authorList>
            <person name="Takami H."/>
            <person name="Takaki Y."/>
            <person name="Chee G.-J."/>
            <person name="Nishi S."/>
            <person name="Shimamura S."/>
            <person name="Suzuki H."/>
            <person name="Matsui S."/>
            <person name="Uchiyama I."/>
        </authorList>
    </citation>
    <scope>NUCLEOTIDE SEQUENCE [LARGE SCALE GENOMIC DNA]</scope>
    <source>
        <strain>HTA426</strain>
    </source>
</reference>
<comment type="function">
    <text evidence="1">Necessary for normal cell division and for the maintenance of normal septation.</text>
</comment>
<comment type="cofactor">
    <cofactor evidence="1">
        <name>Mg(2+)</name>
        <dbReference type="ChEBI" id="CHEBI:18420"/>
    </cofactor>
</comment>
<comment type="similarity">
    <text evidence="1">Belongs to the TRAFAC class TrmE-Era-EngA-EngB-Septin-like GTPase superfamily. EngB GTPase family.</text>
</comment>
<proteinExistence type="inferred from homology"/>
<name>ENGB_GEOKA</name>
<gene>
    <name evidence="1" type="primary">engB</name>
    <name type="ordered locus">GK2649</name>
</gene>
<accession>Q5KWK2</accession>